<proteinExistence type="evidence at protein level"/>
<evidence type="ECO:0000250" key="1"/>
<evidence type="ECO:0000269" key="2">
    <source>
    </source>
</evidence>
<evidence type="ECO:0000269" key="3">
    <source>
    </source>
</evidence>
<evidence type="ECO:0000305" key="4"/>
<evidence type="ECO:0000305" key="5">
    <source>
    </source>
</evidence>
<evidence type="ECO:0007829" key="6">
    <source>
        <dbReference type="PDB" id="4OUN"/>
    </source>
</evidence>
<accession>O31418</accession>
<keyword id="KW-0002">3D-structure</keyword>
<keyword id="KW-0963">Cytoplasm</keyword>
<keyword id="KW-0255">Endonuclease</keyword>
<keyword id="KW-0378">Hydrolase</keyword>
<keyword id="KW-0460">Magnesium</keyword>
<keyword id="KW-0540">Nuclease</keyword>
<keyword id="KW-1185">Reference proteome</keyword>
<keyword id="KW-0690">Ribosome biogenesis</keyword>
<keyword id="KW-0694">RNA-binding</keyword>
<keyword id="KW-0698">rRNA processing</keyword>
<keyword id="KW-0699">rRNA-binding</keyword>
<dbReference type="EC" id="3.1.26.-"/>
<dbReference type="EMBL" id="AL009126">
    <property type="protein sequence ID" value="CAB11871.1"/>
    <property type="molecule type" value="Genomic_DNA"/>
</dbReference>
<dbReference type="PIR" id="C69742">
    <property type="entry name" value="C69742"/>
</dbReference>
<dbReference type="RefSeq" id="NP_387976.1">
    <property type="nucleotide sequence ID" value="NC_000964.3"/>
</dbReference>
<dbReference type="RefSeq" id="WP_004399685.1">
    <property type="nucleotide sequence ID" value="NZ_OZ025638.1"/>
</dbReference>
<dbReference type="PDB" id="4OUN">
    <property type="method" value="X-ray"/>
    <property type="resolution" value="1.80 A"/>
    <property type="chains" value="A=1-143"/>
</dbReference>
<dbReference type="PDB" id="6TNN">
    <property type="method" value="EM"/>
    <property type="resolution" value="3.07 A"/>
    <property type="chains" value="H/I=1-143"/>
</dbReference>
<dbReference type="PDBsum" id="4OUN"/>
<dbReference type="PDBsum" id="6TNN"/>
<dbReference type="EMDB" id="EMD-10535"/>
<dbReference type="SMR" id="O31418"/>
<dbReference type="FunCoup" id="O31418">
    <property type="interactions" value="173"/>
</dbReference>
<dbReference type="STRING" id="224308.BSU00950"/>
<dbReference type="PaxDb" id="224308-BSU00950"/>
<dbReference type="EnsemblBacteria" id="CAB11871">
    <property type="protein sequence ID" value="CAB11871"/>
    <property type="gene ID" value="BSU_00950"/>
</dbReference>
<dbReference type="GeneID" id="936369"/>
<dbReference type="KEGG" id="bsu:BSU00950"/>
<dbReference type="PATRIC" id="fig|224308.179.peg.98"/>
<dbReference type="eggNOG" id="COG1939">
    <property type="taxonomic scope" value="Bacteria"/>
</dbReference>
<dbReference type="InParanoid" id="O31418"/>
<dbReference type="OrthoDB" id="46571at2"/>
<dbReference type="PhylomeDB" id="O31418"/>
<dbReference type="BioCyc" id="BSUB:BSU00950-MONOMER"/>
<dbReference type="BRENDA" id="3.1.26.3">
    <property type="organism ID" value="658"/>
</dbReference>
<dbReference type="EvolutionaryTrace" id="O31418"/>
<dbReference type="Proteomes" id="UP000001570">
    <property type="component" value="Chromosome"/>
</dbReference>
<dbReference type="GO" id="GO:0005737">
    <property type="term" value="C:cytoplasm"/>
    <property type="evidence" value="ECO:0007669"/>
    <property type="project" value="UniProtKB-SubCell"/>
</dbReference>
<dbReference type="GO" id="GO:0004525">
    <property type="term" value="F:ribonuclease III activity"/>
    <property type="evidence" value="ECO:0007669"/>
    <property type="project" value="InterPro"/>
</dbReference>
<dbReference type="GO" id="GO:0004540">
    <property type="term" value="F:RNA nuclease activity"/>
    <property type="evidence" value="ECO:0000314"/>
    <property type="project" value="UniProtKB"/>
</dbReference>
<dbReference type="GO" id="GO:0019843">
    <property type="term" value="F:rRNA binding"/>
    <property type="evidence" value="ECO:0007669"/>
    <property type="project" value="UniProtKB-UniRule"/>
</dbReference>
<dbReference type="GO" id="GO:0006364">
    <property type="term" value="P:rRNA processing"/>
    <property type="evidence" value="ECO:0000314"/>
    <property type="project" value="UniProtKB"/>
</dbReference>
<dbReference type="Gene3D" id="1.10.1520.10">
    <property type="entry name" value="Ribonuclease III domain"/>
    <property type="match status" value="1"/>
</dbReference>
<dbReference type="HAMAP" id="MF_01468">
    <property type="entry name" value="RNase_Mini_III"/>
    <property type="match status" value="1"/>
</dbReference>
<dbReference type="InterPro" id="IPR008226">
    <property type="entry name" value="Mini3_fam"/>
</dbReference>
<dbReference type="InterPro" id="IPR000999">
    <property type="entry name" value="RNase_III_dom"/>
</dbReference>
<dbReference type="InterPro" id="IPR036389">
    <property type="entry name" value="RNase_III_sf"/>
</dbReference>
<dbReference type="PANTHER" id="PTHR34276">
    <property type="entry name" value="MINI-RIBONUCLEASE 3"/>
    <property type="match status" value="1"/>
</dbReference>
<dbReference type="PANTHER" id="PTHR34276:SF1">
    <property type="entry name" value="MINI-RIBONUCLEASE 3"/>
    <property type="match status" value="1"/>
</dbReference>
<dbReference type="Pfam" id="PF00636">
    <property type="entry name" value="Ribonuclease_3"/>
    <property type="match status" value="1"/>
</dbReference>
<dbReference type="PIRSF" id="PIRSF005520">
    <property type="entry name" value="UCP005520"/>
    <property type="match status" value="1"/>
</dbReference>
<dbReference type="SMART" id="SM00535">
    <property type="entry name" value="RIBOc"/>
    <property type="match status" value="1"/>
</dbReference>
<dbReference type="SUPFAM" id="SSF69065">
    <property type="entry name" value="RNase III domain-like"/>
    <property type="match status" value="1"/>
</dbReference>
<reference key="1">
    <citation type="journal article" date="1997" name="Nature">
        <title>The complete genome sequence of the Gram-positive bacterium Bacillus subtilis.</title>
        <authorList>
            <person name="Kunst F."/>
            <person name="Ogasawara N."/>
            <person name="Moszer I."/>
            <person name="Albertini A.M."/>
            <person name="Alloni G."/>
            <person name="Azevedo V."/>
            <person name="Bertero M.G."/>
            <person name="Bessieres P."/>
            <person name="Bolotin A."/>
            <person name="Borchert S."/>
            <person name="Borriss R."/>
            <person name="Boursier L."/>
            <person name="Brans A."/>
            <person name="Braun M."/>
            <person name="Brignell S.C."/>
            <person name="Bron S."/>
            <person name="Brouillet S."/>
            <person name="Bruschi C.V."/>
            <person name="Caldwell B."/>
            <person name="Capuano V."/>
            <person name="Carter N.M."/>
            <person name="Choi S.-K."/>
            <person name="Codani J.-J."/>
            <person name="Connerton I.F."/>
            <person name="Cummings N.J."/>
            <person name="Daniel R.A."/>
            <person name="Denizot F."/>
            <person name="Devine K.M."/>
            <person name="Duesterhoeft A."/>
            <person name="Ehrlich S.D."/>
            <person name="Emmerson P.T."/>
            <person name="Entian K.-D."/>
            <person name="Errington J."/>
            <person name="Fabret C."/>
            <person name="Ferrari E."/>
            <person name="Foulger D."/>
            <person name="Fritz C."/>
            <person name="Fujita M."/>
            <person name="Fujita Y."/>
            <person name="Fuma S."/>
            <person name="Galizzi A."/>
            <person name="Galleron N."/>
            <person name="Ghim S.-Y."/>
            <person name="Glaser P."/>
            <person name="Goffeau A."/>
            <person name="Golightly E.J."/>
            <person name="Grandi G."/>
            <person name="Guiseppi G."/>
            <person name="Guy B.J."/>
            <person name="Haga K."/>
            <person name="Haiech J."/>
            <person name="Harwood C.R."/>
            <person name="Henaut A."/>
            <person name="Hilbert H."/>
            <person name="Holsappel S."/>
            <person name="Hosono S."/>
            <person name="Hullo M.-F."/>
            <person name="Itaya M."/>
            <person name="Jones L.-M."/>
            <person name="Joris B."/>
            <person name="Karamata D."/>
            <person name="Kasahara Y."/>
            <person name="Klaerr-Blanchard M."/>
            <person name="Klein C."/>
            <person name="Kobayashi Y."/>
            <person name="Koetter P."/>
            <person name="Koningstein G."/>
            <person name="Krogh S."/>
            <person name="Kumano M."/>
            <person name="Kurita K."/>
            <person name="Lapidus A."/>
            <person name="Lardinois S."/>
            <person name="Lauber J."/>
            <person name="Lazarevic V."/>
            <person name="Lee S.-M."/>
            <person name="Levine A."/>
            <person name="Liu H."/>
            <person name="Masuda S."/>
            <person name="Mauel C."/>
            <person name="Medigue C."/>
            <person name="Medina N."/>
            <person name="Mellado R.P."/>
            <person name="Mizuno M."/>
            <person name="Moestl D."/>
            <person name="Nakai S."/>
            <person name="Noback M."/>
            <person name="Noone D."/>
            <person name="O'Reilly M."/>
            <person name="Ogawa K."/>
            <person name="Ogiwara A."/>
            <person name="Oudega B."/>
            <person name="Park S.-H."/>
            <person name="Parro V."/>
            <person name="Pohl T.M."/>
            <person name="Portetelle D."/>
            <person name="Porwollik S."/>
            <person name="Prescott A.M."/>
            <person name="Presecan E."/>
            <person name="Pujic P."/>
            <person name="Purnelle B."/>
            <person name="Rapoport G."/>
            <person name="Rey M."/>
            <person name="Reynolds S."/>
            <person name="Rieger M."/>
            <person name="Rivolta C."/>
            <person name="Rocha E."/>
            <person name="Roche B."/>
            <person name="Rose M."/>
            <person name="Sadaie Y."/>
            <person name="Sato T."/>
            <person name="Scanlan E."/>
            <person name="Schleich S."/>
            <person name="Schroeter R."/>
            <person name="Scoffone F."/>
            <person name="Sekiguchi J."/>
            <person name="Sekowska A."/>
            <person name="Seror S.J."/>
            <person name="Serror P."/>
            <person name="Shin B.-S."/>
            <person name="Soldo B."/>
            <person name="Sorokin A."/>
            <person name="Tacconi E."/>
            <person name="Takagi T."/>
            <person name="Takahashi H."/>
            <person name="Takemaru K."/>
            <person name="Takeuchi M."/>
            <person name="Tamakoshi A."/>
            <person name="Tanaka T."/>
            <person name="Terpstra P."/>
            <person name="Tognoni A."/>
            <person name="Tosato V."/>
            <person name="Uchiyama S."/>
            <person name="Vandenbol M."/>
            <person name="Vannier F."/>
            <person name="Vassarotti A."/>
            <person name="Viari A."/>
            <person name="Wambutt R."/>
            <person name="Wedler E."/>
            <person name="Wedler H."/>
            <person name="Weitzenegger T."/>
            <person name="Winters P."/>
            <person name="Wipat A."/>
            <person name="Yamamoto H."/>
            <person name="Yamane K."/>
            <person name="Yasumoto K."/>
            <person name="Yata K."/>
            <person name="Yoshida K."/>
            <person name="Yoshikawa H.-F."/>
            <person name="Zumstein E."/>
            <person name="Yoshikawa H."/>
            <person name="Danchin A."/>
        </authorList>
    </citation>
    <scope>NUCLEOTIDE SEQUENCE [LARGE SCALE GENOMIC DNA]</scope>
    <source>
        <strain>168</strain>
    </source>
</reference>
<reference key="2">
    <citation type="journal article" date="2005" name="Mol. Biol. Evol.">
        <title>How essential are nonessential genes?</title>
        <authorList>
            <person name="Fang G."/>
            <person name="Rocha E."/>
            <person name="Danchin A."/>
        </authorList>
    </citation>
    <scope>DISCUSSION OF POSSIBLE FUNCTION</scope>
</reference>
<reference key="3">
    <citation type="journal article" date="2008" name="Mol. Microbiol.">
        <title>Mini-III, an unusual member of the RNase III family of enzymes, catalyses 23S ribosomal RNA maturation in B. subtilis.</title>
        <authorList>
            <person name="Redko Y."/>
            <person name="Bechhofer D.H."/>
            <person name="Condon C."/>
        </authorList>
    </citation>
    <scope>FUNCTION IN 23S RRNA PROCESSING</scope>
    <scope>RNASE ACTIVITY</scope>
    <scope>SUBUNIT</scope>
    <scope>COFACTOR</scope>
    <scope>DISRUPTION PHENOTYPE</scope>
    <source>
        <strain>168</strain>
    </source>
</reference>
<reference key="4">
    <citation type="journal article" date="2009" name="Mol. Microbiol.">
        <title>Ribosomal protein L3 bound to 23S precursor rRNA stimulates its maturation by Mini-III ribonuclease.</title>
        <authorList>
            <person name="Redko Y."/>
            <person name="Condon C."/>
        </authorList>
    </citation>
    <scope>STIMULATION BY RPLC (RIBOSOMAL PROTEIN L3)</scope>
    <scope>MUTAGENESIS OF ASP-23 AND 41-ARG--ASN-43</scope>
</reference>
<organism>
    <name type="scientific">Bacillus subtilis (strain 168)</name>
    <dbReference type="NCBI Taxonomy" id="224308"/>
    <lineage>
        <taxon>Bacteria</taxon>
        <taxon>Bacillati</taxon>
        <taxon>Bacillota</taxon>
        <taxon>Bacilli</taxon>
        <taxon>Bacillales</taxon>
        <taxon>Bacillaceae</taxon>
        <taxon>Bacillus</taxon>
    </lineage>
</organism>
<name>MRNC_BACSU</name>
<sequence>MLEFDTIKDSKQLNGLALAYIGDAIFEVYVRHHLLKQGFTKPNDLHKKSSRIVSAKSQAEILFFLQNQSFFTEEEEAVLKRGRNAKSGTTPKNTDVQTYRYSTAFEALLGYLFLEKKEERLSQLVAEAIQFGTSGRKTNESAT</sequence>
<comment type="function">
    <text evidence="2">Involved in correct processing of both the 5' and 3' ends of 23S rRNA precursor. Processes 30S rRNA precursor transcript even in absence of ribonuclease 3 (Rnc); Rnc processes 30S rRNA into smaller rRNA precursors. Cleaves more efficiently on assembled 50S ribosomal subunits. Cleavage is strongly stimulated by ribosomal protein L3 (RplC); 20-30% DMSO can replace RplC, suggesting RplC may alter rRNA conformation.</text>
</comment>
<comment type="cofactor">
    <cofactor evidence="2">
        <name>Mg(2+)</name>
        <dbReference type="ChEBI" id="CHEBI:18420"/>
    </cofactor>
</comment>
<comment type="subunit">
    <text evidence="5">Homodimer.</text>
</comment>
<comment type="subcellular location">
    <subcellularLocation>
        <location evidence="1">Cytoplasm</location>
    </subcellularLocation>
</comment>
<comment type="disruption phenotype">
    <text evidence="2">Cells accumulate precursors and mature forms of 23S rRNA with alternative 5' and 3' ends. Defects are more marked during exponential growth.</text>
</comment>
<comment type="similarity">
    <text evidence="4">Belongs to the MrnC RNase family.</text>
</comment>
<protein>
    <recommendedName>
        <fullName>Mini-ribonuclease 3</fullName>
        <shortName>Mini-3</shortName>
        <shortName>Mini-RNase 3</shortName>
        <ecNumber>3.1.26.-</ecNumber>
    </recommendedName>
    <alternativeName>
        <fullName>Mini-RNase III</fullName>
        <shortName>Mini-III</shortName>
    </alternativeName>
</protein>
<feature type="chain" id="PRO_0000390306" description="Mini-ribonuclease 3">
    <location>
        <begin position="1"/>
        <end position="143"/>
    </location>
</feature>
<feature type="active site" evidence="4">
    <location>
        <position position="23"/>
    </location>
</feature>
<feature type="mutagenesis site" description="Catalytic mutant, no alteration in rRNA binding." evidence="3">
    <original>D</original>
    <variation>N</variation>
    <location>
        <position position="23"/>
    </location>
</feature>
<feature type="mutagenesis site" description="Retains nuclease activity, still stimulated by L3." evidence="3">
    <original>KPN</original>
    <variation>AAA</variation>
    <location>
        <begin position="41"/>
        <end position="43"/>
    </location>
</feature>
<feature type="helix" evidence="6">
    <location>
        <begin position="10"/>
        <end position="12"/>
    </location>
</feature>
<feature type="helix" evidence="6">
    <location>
        <begin position="15"/>
        <end position="36"/>
    </location>
</feature>
<feature type="helix" evidence="6">
    <location>
        <begin position="42"/>
        <end position="53"/>
    </location>
</feature>
<feature type="helix" evidence="6">
    <location>
        <begin position="55"/>
        <end position="67"/>
    </location>
</feature>
<feature type="helix" evidence="6">
    <location>
        <begin position="73"/>
        <end position="83"/>
    </location>
</feature>
<feature type="helix" evidence="6">
    <location>
        <begin position="96"/>
        <end position="114"/>
    </location>
</feature>
<feature type="helix" evidence="6">
    <location>
        <begin position="118"/>
        <end position="133"/>
    </location>
</feature>
<gene>
    <name type="primary">mrnC</name>
    <name type="synonym">yazC</name>
    <name type="ordered locus">BSU00950</name>
</gene>